<feature type="chain" id="PRO_1000075190" description="Transcription antitermination protein NusB">
    <location>
        <begin position="1"/>
        <end position="136"/>
    </location>
</feature>
<reference key="1">
    <citation type="journal article" date="2008" name="PLoS ONE">
        <title>Survival in nuclear waste, extreme resistance, and potential applications gleaned from the genome sequence of Kineococcus radiotolerans SRS30216.</title>
        <authorList>
            <person name="Bagwell C.E."/>
            <person name="Bhat S."/>
            <person name="Hawkins G.M."/>
            <person name="Smith B.W."/>
            <person name="Biswas T."/>
            <person name="Hoover T.R."/>
            <person name="Saunders E."/>
            <person name="Han C.S."/>
            <person name="Tsodikov O.V."/>
            <person name="Shimkets L.J."/>
        </authorList>
    </citation>
    <scope>NUCLEOTIDE SEQUENCE [LARGE SCALE GENOMIC DNA]</scope>
    <source>
        <strain>ATCC BAA-149 / DSM 14245 / SRS30216</strain>
    </source>
</reference>
<organism>
    <name type="scientific">Kineococcus radiotolerans (strain ATCC BAA-149 / DSM 14245 / SRS30216)</name>
    <dbReference type="NCBI Taxonomy" id="266940"/>
    <lineage>
        <taxon>Bacteria</taxon>
        <taxon>Bacillati</taxon>
        <taxon>Actinomycetota</taxon>
        <taxon>Actinomycetes</taxon>
        <taxon>Kineosporiales</taxon>
        <taxon>Kineosporiaceae</taxon>
        <taxon>Kineococcus</taxon>
    </lineage>
</organism>
<dbReference type="EMBL" id="CP000750">
    <property type="protein sequence ID" value="ABS04472.1"/>
    <property type="molecule type" value="Genomic_DNA"/>
</dbReference>
<dbReference type="RefSeq" id="WP_012087281.1">
    <property type="nucleotide sequence ID" value="NC_009664.2"/>
</dbReference>
<dbReference type="SMR" id="A6WCD3"/>
<dbReference type="STRING" id="266940.Krad_3008"/>
<dbReference type="KEGG" id="kra:Krad_3008"/>
<dbReference type="eggNOG" id="COG0781">
    <property type="taxonomic scope" value="Bacteria"/>
</dbReference>
<dbReference type="HOGENOM" id="CLU_087843_2_3_11"/>
<dbReference type="OrthoDB" id="3528057at2"/>
<dbReference type="Proteomes" id="UP000001116">
    <property type="component" value="Chromosome"/>
</dbReference>
<dbReference type="GO" id="GO:0005829">
    <property type="term" value="C:cytosol"/>
    <property type="evidence" value="ECO:0007669"/>
    <property type="project" value="TreeGrafter"/>
</dbReference>
<dbReference type="GO" id="GO:0003723">
    <property type="term" value="F:RNA binding"/>
    <property type="evidence" value="ECO:0007669"/>
    <property type="project" value="UniProtKB-UniRule"/>
</dbReference>
<dbReference type="GO" id="GO:0006353">
    <property type="term" value="P:DNA-templated transcription termination"/>
    <property type="evidence" value="ECO:0007669"/>
    <property type="project" value="UniProtKB-UniRule"/>
</dbReference>
<dbReference type="GO" id="GO:0031564">
    <property type="term" value="P:transcription antitermination"/>
    <property type="evidence" value="ECO:0007669"/>
    <property type="project" value="UniProtKB-KW"/>
</dbReference>
<dbReference type="Gene3D" id="1.10.940.10">
    <property type="entry name" value="NusB-like"/>
    <property type="match status" value="1"/>
</dbReference>
<dbReference type="HAMAP" id="MF_00073">
    <property type="entry name" value="NusB"/>
    <property type="match status" value="1"/>
</dbReference>
<dbReference type="InterPro" id="IPR035926">
    <property type="entry name" value="NusB-like_sf"/>
</dbReference>
<dbReference type="InterPro" id="IPR011605">
    <property type="entry name" value="NusB_fam"/>
</dbReference>
<dbReference type="InterPro" id="IPR006027">
    <property type="entry name" value="NusB_RsmB_TIM44"/>
</dbReference>
<dbReference type="NCBIfam" id="TIGR01951">
    <property type="entry name" value="nusB"/>
    <property type="match status" value="1"/>
</dbReference>
<dbReference type="PANTHER" id="PTHR11078:SF3">
    <property type="entry name" value="ANTITERMINATION NUSB DOMAIN-CONTAINING PROTEIN"/>
    <property type="match status" value="1"/>
</dbReference>
<dbReference type="PANTHER" id="PTHR11078">
    <property type="entry name" value="N UTILIZATION SUBSTANCE PROTEIN B-RELATED"/>
    <property type="match status" value="1"/>
</dbReference>
<dbReference type="Pfam" id="PF01029">
    <property type="entry name" value="NusB"/>
    <property type="match status" value="1"/>
</dbReference>
<dbReference type="SUPFAM" id="SSF48013">
    <property type="entry name" value="NusB-like"/>
    <property type="match status" value="1"/>
</dbReference>
<protein>
    <recommendedName>
        <fullName evidence="1">Transcription antitermination protein NusB</fullName>
    </recommendedName>
    <alternativeName>
        <fullName evidence="1">Antitermination factor NusB</fullName>
    </alternativeName>
</protein>
<gene>
    <name evidence="1" type="primary">nusB</name>
    <name type="ordered locus">Krad_3008</name>
</gene>
<accession>A6WCD3</accession>
<evidence type="ECO:0000255" key="1">
    <source>
        <dbReference type="HAMAP-Rule" id="MF_00073"/>
    </source>
</evidence>
<comment type="function">
    <text evidence="1">Involved in transcription antitermination. Required for transcription of ribosomal RNA (rRNA) genes. Binds specifically to the boxA antiterminator sequence of the ribosomal RNA (rrn) operons.</text>
</comment>
<comment type="similarity">
    <text evidence="1">Belongs to the NusB family.</text>
</comment>
<sequence length="136" mass="15034">MAARRKARKRALEVLFEADQRGLAPLDVLKDKILRADPPVGEYAVTVVEGVVEHQARIDEVLSTYSMAWPLDRMPAVDRALLRIGTWEVLYAADVPDHVAVSEAVEIAQELSTDESPKFVNGLLARIAELKETLSA</sequence>
<keyword id="KW-1185">Reference proteome</keyword>
<keyword id="KW-0694">RNA-binding</keyword>
<keyword id="KW-0804">Transcription</keyword>
<keyword id="KW-0889">Transcription antitermination</keyword>
<keyword id="KW-0805">Transcription regulation</keyword>
<proteinExistence type="inferred from homology"/>
<name>NUSB_KINRD</name>